<accession>P44498</accession>
<comment type="function">
    <text evidence="1">Thioesterase that has relatively broad substrate specificity, hydrolyzing primarily medium- and long-chain acyl-CoA substrates to free fatty acids and CoA.</text>
</comment>
<comment type="catalytic activity">
    <reaction evidence="1">
        <text>a fatty acyl-CoA + H2O = a fatty acid + CoA + H(+)</text>
        <dbReference type="Rhea" id="RHEA:16781"/>
        <dbReference type="ChEBI" id="CHEBI:15377"/>
        <dbReference type="ChEBI" id="CHEBI:15378"/>
        <dbReference type="ChEBI" id="CHEBI:28868"/>
        <dbReference type="ChEBI" id="CHEBI:57287"/>
        <dbReference type="ChEBI" id="CHEBI:77636"/>
        <dbReference type="EC" id="3.1.2.20"/>
    </reaction>
    <physiologicalReaction direction="left-to-right" evidence="1">
        <dbReference type="Rhea" id="RHEA:16782"/>
    </physiologicalReaction>
</comment>
<comment type="subunit">
    <text evidence="1">Homotetramer.</text>
</comment>
<comment type="similarity">
    <text evidence="2">Belongs to the C/M/P thioester hydrolase family.</text>
</comment>
<protein>
    <recommendedName>
        <fullName>Acyl-CoA thioesterase 2</fullName>
        <ecNumber evidence="1">3.1.2.20</ecNumber>
    </recommendedName>
    <alternativeName>
        <fullName>Thioesterase II</fullName>
        <shortName>TEII</shortName>
    </alternativeName>
</protein>
<dbReference type="EC" id="3.1.2.20" evidence="1"/>
<dbReference type="EMBL" id="L42023">
    <property type="protein sequence ID" value="AAC21752.1"/>
    <property type="molecule type" value="Genomic_DNA"/>
</dbReference>
<dbReference type="PIR" id="B64047">
    <property type="entry name" value="B64047"/>
</dbReference>
<dbReference type="RefSeq" id="NP_438249.1">
    <property type="nucleotide sequence ID" value="NC_000907.1"/>
</dbReference>
<dbReference type="SMR" id="P44498"/>
<dbReference type="STRING" id="71421.HI_0076"/>
<dbReference type="EnsemblBacteria" id="AAC21752">
    <property type="protein sequence ID" value="AAC21752"/>
    <property type="gene ID" value="HI_0076"/>
</dbReference>
<dbReference type="KEGG" id="hin:HI_0076"/>
<dbReference type="PATRIC" id="fig|71421.8.peg.77"/>
<dbReference type="eggNOG" id="COG1946">
    <property type="taxonomic scope" value="Bacteria"/>
</dbReference>
<dbReference type="HOGENOM" id="CLU_032690_0_0_6"/>
<dbReference type="OrthoDB" id="9781019at2"/>
<dbReference type="PhylomeDB" id="P44498"/>
<dbReference type="BioCyc" id="HINF71421:G1GJ1-77-MONOMER"/>
<dbReference type="Proteomes" id="UP000000579">
    <property type="component" value="Chromosome"/>
</dbReference>
<dbReference type="GO" id="GO:0005829">
    <property type="term" value="C:cytosol"/>
    <property type="evidence" value="ECO:0000318"/>
    <property type="project" value="GO_Central"/>
</dbReference>
<dbReference type="GO" id="GO:0047617">
    <property type="term" value="F:fatty acyl-CoA hydrolase activity"/>
    <property type="evidence" value="ECO:0000318"/>
    <property type="project" value="GO_Central"/>
</dbReference>
<dbReference type="GO" id="GO:0006637">
    <property type="term" value="P:acyl-CoA metabolic process"/>
    <property type="evidence" value="ECO:0000318"/>
    <property type="project" value="GO_Central"/>
</dbReference>
<dbReference type="GO" id="GO:0009062">
    <property type="term" value="P:fatty acid catabolic process"/>
    <property type="evidence" value="ECO:0000318"/>
    <property type="project" value="GO_Central"/>
</dbReference>
<dbReference type="CDD" id="cd03444">
    <property type="entry name" value="Thioesterase_II_repeat1"/>
    <property type="match status" value="1"/>
</dbReference>
<dbReference type="CDD" id="cd03445">
    <property type="entry name" value="Thioesterase_II_repeat2"/>
    <property type="match status" value="1"/>
</dbReference>
<dbReference type="FunFam" id="2.40.160.210:FF:000001">
    <property type="entry name" value="Acyl-CoA thioesterase II"/>
    <property type="match status" value="1"/>
</dbReference>
<dbReference type="Gene3D" id="2.40.160.210">
    <property type="entry name" value="Acyl-CoA thioesterase, double hotdog domain"/>
    <property type="match status" value="1"/>
</dbReference>
<dbReference type="InterPro" id="IPR042171">
    <property type="entry name" value="Acyl-CoA_hotdog"/>
</dbReference>
<dbReference type="InterPro" id="IPR003703">
    <property type="entry name" value="Acyl_CoA_thio"/>
</dbReference>
<dbReference type="InterPro" id="IPR029069">
    <property type="entry name" value="HotDog_dom_sf"/>
</dbReference>
<dbReference type="InterPro" id="IPR049449">
    <property type="entry name" value="TesB_ACOT8-like_N"/>
</dbReference>
<dbReference type="InterPro" id="IPR025652">
    <property type="entry name" value="TesB_C"/>
</dbReference>
<dbReference type="NCBIfam" id="TIGR00189">
    <property type="entry name" value="tesB"/>
    <property type="match status" value="1"/>
</dbReference>
<dbReference type="PANTHER" id="PTHR11066">
    <property type="entry name" value="ACYL-COA THIOESTERASE"/>
    <property type="match status" value="1"/>
</dbReference>
<dbReference type="PANTHER" id="PTHR11066:SF34">
    <property type="entry name" value="ACYL-COENZYME A THIOESTERASE 8"/>
    <property type="match status" value="1"/>
</dbReference>
<dbReference type="Pfam" id="PF13622">
    <property type="entry name" value="4HBT_3"/>
    <property type="match status" value="1"/>
</dbReference>
<dbReference type="Pfam" id="PF02551">
    <property type="entry name" value="Acyl_CoA_thio"/>
    <property type="match status" value="1"/>
</dbReference>
<dbReference type="SUPFAM" id="SSF54637">
    <property type="entry name" value="Thioesterase/thiol ester dehydrase-isomerase"/>
    <property type="match status" value="2"/>
</dbReference>
<feature type="chain" id="PRO_0000202146" description="Acyl-CoA thioesterase 2">
    <location>
        <begin position="1"/>
        <end position="286"/>
    </location>
</feature>
<feature type="active site" description="Charge relay system" evidence="1">
    <location>
        <position position="204"/>
    </location>
</feature>
<feature type="active site" description="Charge relay system" evidence="1">
    <location>
        <position position="228"/>
    </location>
</feature>
<feature type="active site" description="Charge relay system" evidence="1">
    <location>
        <position position="278"/>
    </location>
</feature>
<gene>
    <name type="primary">tesB</name>
    <name type="ordered locus">HI_0076</name>
</gene>
<reference key="1">
    <citation type="journal article" date="1995" name="Science">
        <title>Whole-genome random sequencing and assembly of Haemophilus influenzae Rd.</title>
        <authorList>
            <person name="Fleischmann R.D."/>
            <person name="Adams M.D."/>
            <person name="White O."/>
            <person name="Clayton R.A."/>
            <person name="Kirkness E.F."/>
            <person name="Kerlavage A.R."/>
            <person name="Bult C.J."/>
            <person name="Tomb J.-F."/>
            <person name="Dougherty B.A."/>
            <person name="Merrick J.M."/>
            <person name="McKenney K."/>
            <person name="Sutton G.G."/>
            <person name="FitzHugh W."/>
            <person name="Fields C.A."/>
            <person name="Gocayne J.D."/>
            <person name="Scott J.D."/>
            <person name="Shirley R."/>
            <person name="Liu L.-I."/>
            <person name="Glodek A."/>
            <person name="Kelley J.M."/>
            <person name="Weidman J.F."/>
            <person name="Phillips C.A."/>
            <person name="Spriggs T."/>
            <person name="Hedblom E."/>
            <person name="Cotton M.D."/>
            <person name="Utterback T.R."/>
            <person name="Hanna M.C."/>
            <person name="Nguyen D.T."/>
            <person name="Saudek D.M."/>
            <person name="Brandon R.C."/>
            <person name="Fine L.D."/>
            <person name="Fritchman J.L."/>
            <person name="Fuhrmann J.L."/>
            <person name="Geoghagen N.S.M."/>
            <person name="Gnehm C.L."/>
            <person name="McDonald L.A."/>
            <person name="Small K.V."/>
            <person name="Fraser C.M."/>
            <person name="Smith H.O."/>
            <person name="Venter J.C."/>
        </authorList>
    </citation>
    <scope>NUCLEOTIDE SEQUENCE [LARGE SCALE GENOMIC DNA]</scope>
    <source>
        <strain>ATCC 51907 / DSM 11121 / KW20 / Rd</strain>
    </source>
</reference>
<name>TESB_HAEIN</name>
<keyword id="KW-0378">Hydrolase</keyword>
<keyword id="KW-0443">Lipid metabolism</keyword>
<keyword id="KW-1185">Reference proteome</keyword>
<sequence length="286" mass="32406">MSDILNNLIHLLKLEKIDDLIFRGESQDLGFRQVFGGQVVAQALSAAMQVAPEDRILHSCHAYFLAPGDSQYPIIYDVETLREGRNFSALCVKAIQHKNTICHVTASFQVPEKGFEHQNTMPNVGAPEDFTDENVMLQKVAQTLPEPLNEKFAAERPFEVRTKYLNNPFNGTKLPAEQYSWFKTNGETPLDIKIQQCLLAYFSDFHCILTALHPHEKGFLQKGMKVATIDHSIWFHRPFDLNHWHLHAIESNNAFGGRGLAQGQIFSQDGQLIATTQQEGLIRFSE</sequence>
<evidence type="ECO:0000250" key="1">
    <source>
        <dbReference type="UniProtKB" id="P0AGG2"/>
    </source>
</evidence>
<evidence type="ECO:0000305" key="2"/>
<organism>
    <name type="scientific">Haemophilus influenzae (strain ATCC 51907 / DSM 11121 / KW20 / Rd)</name>
    <dbReference type="NCBI Taxonomy" id="71421"/>
    <lineage>
        <taxon>Bacteria</taxon>
        <taxon>Pseudomonadati</taxon>
        <taxon>Pseudomonadota</taxon>
        <taxon>Gammaproteobacteria</taxon>
        <taxon>Pasteurellales</taxon>
        <taxon>Pasteurellaceae</taxon>
        <taxon>Haemophilus</taxon>
    </lineage>
</organism>
<proteinExistence type="inferred from homology"/>